<accession>Q6XXY0</accession>
<gene>
    <name type="primary">HTR1A</name>
</gene>
<protein>
    <recommendedName>
        <fullName>5-hydroxytryptamine receptor 1A</fullName>
        <shortName>5-HT-1A</shortName>
        <shortName>5-HT1A</shortName>
    </recommendedName>
    <alternativeName>
        <fullName>Serotonin receptor 1A</fullName>
    </alternativeName>
</protein>
<comment type="function">
    <text evidence="1">G-protein coupled receptor for 5-hydroxytryptamine (serotonin). Also functions as a receptor for various drugs and psychoactive substances. Ligand binding causes a conformation change that triggers signaling via guanine nucleotide-binding proteins (G proteins) and modulates the activity of downstream effectors, such as adenylate cyclase. HTR1A is coupled to G(i)/G(o) G alpha proteins and mediates inhibitory neurotransmission: signaling inhibits adenylate cyclase activity and activates a phosphatidylinositol-calcium second messenger system that regulates the release of Ca(2+) ions from intracellular stores. Beta-arrestin family members regulate signaling by mediating both receptor desensitization and resensitization processes.</text>
</comment>
<comment type="activity regulation">
    <text evidence="1">G-protein coupled receptor activity is regulated by lipids: phosphatidylinositol 4-phosphate increases HTR1A-mediated activity.</text>
</comment>
<comment type="subunit">
    <text evidence="1 2">Heterodimer; heterodimerizes with GPER1 (By similarity). Interacts with YIF1B (By similarity). Interacts with GPR39 and GALR1 (By similarity).</text>
</comment>
<comment type="subcellular location">
    <subcellularLocation>
        <location evidence="1">Cell membrane</location>
        <topology evidence="1">Multi-pass membrane protein</topology>
    </subcellularLocation>
    <subcellularLocation>
        <location evidence="2">Cell projection</location>
        <location evidence="2">Dendrite</location>
    </subcellularLocation>
</comment>
<comment type="similarity">
    <text evidence="5">Belongs to the G-protein coupled receptor 1 family. 5-hydroxytryptamine receptor subfamily. HTR1A sub-subfamily.</text>
</comment>
<keyword id="KW-0085">Behavior</keyword>
<keyword id="KW-1003">Cell membrane</keyword>
<keyword id="KW-0966">Cell projection</keyword>
<keyword id="KW-1015">Disulfide bond</keyword>
<keyword id="KW-0297">G-protein coupled receptor</keyword>
<keyword id="KW-0325">Glycoprotein</keyword>
<keyword id="KW-0472">Membrane</keyword>
<keyword id="KW-0675">Receptor</keyword>
<keyword id="KW-1185">Reference proteome</keyword>
<keyword id="KW-0807">Transducer</keyword>
<keyword id="KW-0812">Transmembrane</keyword>
<keyword id="KW-1133">Transmembrane helix</keyword>
<proteinExistence type="inferred from homology"/>
<dbReference type="EMBL" id="AY204569">
    <property type="protein sequence ID" value="AAP12466.1"/>
    <property type="molecule type" value="Genomic_DNA"/>
</dbReference>
<dbReference type="RefSeq" id="XP_025838909.1">
    <property type="nucleotide sequence ID" value="XM_025983124.1"/>
</dbReference>
<dbReference type="SMR" id="Q6XXY0"/>
<dbReference type="STRING" id="9627.ENSVVUP00000007246"/>
<dbReference type="GlyCosmos" id="Q6XXY0">
    <property type="glycosylation" value="3 sites, No reported glycans"/>
</dbReference>
<dbReference type="Ensembl" id="ENSVVUT00000009583">
    <property type="protein sequence ID" value="ENSVVUP00000007246"/>
    <property type="gene ID" value="ENSVVUG00000005510"/>
</dbReference>
<dbReference type="GeneID" id="112907774"/>
<dbReference type="OMA" id="VQHCNSS"/>
<dbReference type="Proteomes" id="UP000286640">
    <property type="component" value="Unplaced"/>
</dbReference>
<dbReference type="GO" id="GO:0030425">
    <property type="term" value="C:dendrite"/>
    <property type="evidence" value="ECO:0007669"/>
    <property type="project" value="UniProtKB-SubCell"/>
</dbReference>
<dbReference type="GO" id="GO:0005886">
    <property type="term" value="C:plasma membrane"/>
    <property type="evidence" value="ECO:0000250"/>
    <property type="project" value="UniProtKB"/>
</dbReference>
<dbReference type="GO" id="GO:0004993">
    <property type="term" value="F:G protein-coupled serotonin receptor activity"/>
    <property type="evidence" value="ECO:0000250"/>
    <property type="project" value="UniProtKB"/>
</dbReference>
<dbReference type="GO" id="GO:0071880">
    <property type="term" value="P:adenylate cyclase-activating adrenergic receptor signaling pathway"/>
    <property type="evidence" value="ECO:0007669"/>
    <property type="project" value="TreeGrafter"/>
</dbReference>
<dbReference type="GO" id="GO:0007198">
    <property type="term" value="P:adenylate cyclase-inhibiting serotonin receptor signaling pathway"/>
    <property type="evidence" value="ECO:0000250"/>
    <property type="project" value="UniProtKB"/>
</dbReference>
<dbReference type="GO" id="GO:0001662">
    <property type="term" value="P:behavioral fear response"/>
    <property type="evidence" value="ECO:0000250"/>
    <property type="project" value="UniProtKB"/>
</dbReference>
<dbReference type="GO" id="GO:0035640">
    <property type="term" value="P:exploration behavior"/>
    <property type="evidence" value="ECO:0000250"/>
    <property type="project" value="UniProtKB"/>
</dbReference>
<dbReference type="GO" id="GO:0043410">
    <property type="term" value="P:positive regulation of MAPK cascade"/>
    <property type="evidence" value="ECO:0007669"/>
    <property type="project" value="TreeGrafter"/>
</dbReference>
<dbReference type="GO" id="GO:0050795">
    <property type="term" value="P:regulation of behavior"/>
    <property type="evidence" value="ECO:0007669"/>
    <property type="project" value="InterPro"/>
</dbReference>
<dbReference type="GO" id="GO:0042053">
    <property type="term" value="P:regulation of dopamine metabolic process"/>
    <property type="evidence" value="ECO:0000250"/>
    <property type="project" value="UniProtKB"/>
</dbReference>
<dbReference type="GO" id="GO:0046883">
    <property type="term" value="P:regulation of hormone secretion"/>
    <property type="evidence" value="ECO:0007669"/>
    <property type="project" value="InterPro"/>
</dbReference>
<dbReference type="GO" id="GO:0014062">
    <property type="term" value="P:regulation of serotonin secretion"/>
    <property type="evidence" value="ECO:0000250"/>
    <property type="project" value="UniProtKB"/>
</dbReference>
<dbReference type="GO" id="GO:0019229">
    <property type="term" value="P:regulation of vasoconstriction"/>
    <property type="evidence" value="ECO:0007669"/>
    <property type="project" value="InterPro"/>
</dbReference>
<dbReference type="GO" id="GO:0042428">
    <property type="term" value="P:serotonin metabolic process"/>
    <property type="evidence" value="ECO:0000250"/>
    <property type="project" value="UniProtKB"/>
</dbReference>
<dbReference type="GO" id="GO:0007210">
    <property type="term" value="P:serotonin receptor signaling pathway"/>
    <property type="evidence" value="ECO:0000250"/>
    <property type="project" value="UniProtKB"/>
</dbReference>
<dbReference type="CDD" id="cd15330">
    <property type="entry name" value="7tmA_5-HT1A_vertebrates"/>
    <property type="match status" value="1"/>
</dbReference>
<dbReference type="Gene3D" id="1.20.1070.10">
    <property type="entry name" value="Rhodopsin 7-helix transmembrane proteins"/>
    <property type="match status" value="1"/>
</dbReference>
<dbReference type="InterPro" id="IPR000610">
    <property type="entry name" value="5HT1A_rcpt"/>
</dbReference>
<dbReference type="InterPro" id="IPR002231">
    <property type="entry name" value="5HT_rcpt"/>
</dbReference>
<dbReference type="InterPro" id="IPR000276">
    <property type="entry name" value="GPCR_Rhodpsn"/>
</dbReference>
<dbReference type="InterPro" id="IPR017452">
    <property type="entry name" value="GPCR_Rhodpsn_7TM"/>
</dbReference>
<dbReference type="PANTHER" id="PTHR24248:SF191">
    <property type="entry name" value="5-HYDROXYTRYPTAMINE RECEPTOR 1A"/>
    <property type="match status" value="1"/>
</dbReference>
<dbReference type="PANTHER" id="PTHR24248">
    <property type="entry name" value="ADRENERGIC RECEPTOR-RELATED G-PROTEIN COUPLED RECEPTOR"/>
    <property type="match status" value="1"/>
</dbReference>
<dbReference type="Pfam" id="PF00001">
    <property type="entry name" value="7tm_1"/>
    <property type="match status" value="1"/>
</dbReference>
<dbReference type="PRINTS" id="PR00512">
    <property type="entry name" value="5HT1ARECEPTR"/>
</dbReference>
<dbReference type="PRINTS" id="PR01101">
    <property type="entry name" value="5HTRECEPTOR"/>
</dbReference>
<dbReference type="PRINTS" id="PR00237">
    <property type="entry name" value="GPCRRHODOPSN"/>
</dbReference>
<dbReference type="SMART" id="SM01381">
    <property type="entry name" value="7TM_GPCR_Srsx"/>
    <property type="match status" value="1"/>
</dbReference>
<dbReference type="SUPFAM" id="SSF81321">
    <property type="entry name" value="Family A G protein-coupled receptor-like"/>
    <property type="match status" value="1"/>
</dbReference>
<dbReference type="PROSITE" id="PS00237">
    <property type="entry name" value="G_PROTEIN_RECEP_F1_1"/>
    <property type="match status" value="1"/>
</dbReference>
<dbReference type="PROSITE" id="PS50262">
    <property type="entry name" value="G_PROTEIN_RECEP_F1_2"/>
    <property type="match status" value="1"/>
</dbReference>
<feature type="chain" id="PRO_0000068908" description="5-hydroxytryptamine receptor 1A">
    <location>
        <begin position="1"/>
        <end position="423"/>
    </location>
</feature>
<feature type="topological domain" description="Extracellular" evidence="1">
    <location>
        <begin position="1"/>
        <end position="38"/>
    </location>
</feature>
<feature type="transmembrane region" description="Helical; Name=1" evidence="1">
    <location>
        <begin position="39"/>
        <end position="59"/>
    </location>
</feature>
<feature type="topological domain" description="Cytoplasmic" evidence="1">
    <location>
        <begin position="60"/>
        <end position="73"/>
    </location>
</feature>
<feature type="transmembrane region" description="Helical; Name=2" evidence="1">
    <location>
        <begin position="74"/>
        <end position="98"/>
    </location>
</feature>
<feature type="topological domain" description="Extracellular" evidence="1">
    <location>
        <begin position="99"/>
        <end position="107"/>
    </location>
</feature>
<feature type="transmembrane region" description="Helical; Name=3" evidence="1">
    <location>
        <begin position="108"/>
        <end position="132"/>
    </location>
</feature>
<feature type="topological domain" description="Cytoplasmic" evidence="1 7">
    <location>
        <begin position="133"/>
        <end position="152"/>
    </location>
</feature>
<feature type="transmembrane region" description="Helical; Name=4" evidence="1">
    <location>
        <begin position="153"/>
        <end position="174"/>
    </location>
</feature>
<feature type="topological domain" description="Extracellular" evidence="1">
    <location>
        <begin position="175"/>
        <end position="193"/>
    </location>
</feature>
<feature type="transmembrane region" description="Helical; Name=5" evidence="1">
    <location>
        <begin position="194"/>
        <end position="216"/>
    </location>
</feature>
<feature type="topological domain" description="Cytoplasmic" evidence="1">
    <location>
        <begin position="217"/>
        <end position="346"/>
    </location>
</feature>
<feature type="transmembrane region" description="Helical; Name=6" evidence="1">
    <location>
        <begin position="347"/>
        <end position="370"/>
    </location>
</feature>
<feature type="topological domain" description="Extracellular" evidence="1">
    <location>
        <begin position="371"/>
        <end position="378"/>
    </location>
</feature>
<feature type="transmembrane region" description="Helical; Name=7" evidence="1">
    <location>
        <begin position="379"/>
        <end position="403"/>
    </location>
</feature>
<feature type="topological domain" description="Cytoplasmic" evidence="1">
    <location>
        <begin position="404"/>
        <end position="423"/>
    </location>
</feature>
<feature type="region of interest" description="Disordered" evidence="6">
    <location>
        <begin position="1"/>
        <end position="20"/>
    </location>
</feature>
<feature type="region of interest" description="Disordered" evidence="6">
    <location>
        <begin position="235"/>
        <end position="277"/>
    </location>
</feature>
<feature type="short sequence motif" description="DRY motif; important for ligand-induced conformation changes" evidence="3">
    <location>
        <begin position="133"/>
        <end position="135"/>
    </location>
</feature>
<feature type="short sequence motif" description="NPxxY motif; important for ligand-induced conformation changes and signaling" evidence="3">
    <location>
        <begin position="396"/>
        <end position="400"/>
    </location>
</feature>
<feature type="compositionally biased region" description="Polar residues" evidence="6">
    <location>
        <begin position="7"/>
        <end position="16"/>
    </location>
</feature>
<feature type="binding site" evidence="1">
    <location>
        <position position="116"/>
    </location>
    <ligand>
        <name>serotonin</name>
        <dbReference type="ChEBI" id="CHEBI:350546"/>
    </ligand>
</feature>
<feature type="binding site" evidence="1">
    <location>
        <position position="120"/>
    </location>
    <ligand>
        <name>serotonin</name>
        <dbReference type="ChEBI" id="CHEBI:350546"/>
    </ligand>
</feature>
<feature type="binding site" evidence="1">
    <location>
        <position position="345"/>
    </location>
    <ligand>
        <name>1D-myo-inositol 4-phosphate</name>
        <dbReference type="ChEBI" id="CHEBI:58469"/>
    </ligand>
</feature>
<feature type="binding site" evidence="1">
    <location>
        <position position="346"/>
    </location>
    <ligand>
        <name>1D-myo-inositol 4-phosphate</name>
        <dbReference type="ChEBI" id="CHEBI:58469"/>
    </ligand>
</feature>
<feature type="binding site" evidence="1">
    <location>
        <position position="352"/>
    </location>
    <ligand>
        <name>1D-myo-inositol 4-phosphate</name>
        <dbReference type="ChEBI" id="CHEBI:58469"/>
    </ligand>
</feature>
<feature type="binding site" evidence="1">
    <location>
        <position position="403"/>
    </location>
    <ligand>
        <name>1D-myo-inositol 4-phosphate</name>
        <dbReference type="ChEBI" id="CHEBI:58469"/>
    </ligand>
</feature>
<feature type="binding site" evidence="1">
    <location>
        <position position="404"/>
    </location>
    <ligand>
        <name>1D-myo-inositol 4-phosphate</name>
        <dbReference type="ChEBI" id="CHEBI:58469"/>
    </ligand>
</feature>
<feature type="binding site" evidence="1">
    <location>
        <position position="405"/>
    </location>
    <ligand>
        <name>1D-myo-inositol 4-phosphate</name>
        <dbReference type="ChEBI" id="CHEBI:58469"/>
    </ligand>
</feature>
<feature type="glycosylation site" description="N-linked (GlcNAc...) asparagine" evidence="4">
    <location>
        <position position="10"/>
    </location>
</feature>
<feature type="glycosylation site" description="N-linked (GlcNAc...) asparagine" evidence="4">
    <location>
        <position position="11"/>
    </location>
</feature>
<feature type="glycosylation site" description="N-linked (GlcNAc...) asparagine" evidence="4">
    <location>
        <position position="24"/>
    </location>
</feature>
<feature type="disulfide bond" evidence="5">
    <location>
        <begin position="109"/>
        <end position="187"/>
    </location>
</feature>
<evidence type="ECO:0000250" key="1">
    <source>
        <dbReference type="UniProtKB" id="P08908"/>
    </source>
</evidence>
<evidence type="ECO:0000250" key="2">
    <source>
        <dbReference type="UniProtKB" id="P19327"/>
    </source>
</evidence>
<evidence type="ECO:0000250" key="3">
    <source>
        <dbReference type="UniProtKB" id="P41595"/>
    </source>
</evidence>
<evidence type="ECO:0000255" key="4"/>
<evidence type="ECO:0000255" key="5">
    <source>
        <dbReference type="PROSITE-ProRule" id="PRU00521"/>
    </source>
</evidence>
<evidence type="ECO:0000256" key="6">
    <source>
        <dbReference type="SAM" id="MobiDB-lite"/>
    </source>
</evidence>
<evidence type="ECO:0000305" key="7"/>
<reference key="1">
    <citation type="journal article" date="2004" name="J. Hered.">
        <title>A marker set for construction of a genetic map of the silver fox (Vulpes vulpes).</title>
        <authorList>
            <person name="Kukekova A.V."/>
            <person name="Trut L.N."/>
            <person name="Oskina I.N."/>
            <person name="Kharlamova A.V."/>
            <person name="Shikhevich S.G."/>
            <person name="Kirkness E.F."/>
            <person name="Aguirre G.D."/>
            <person name="Acland G.M."/>
        </authorList>
    </citation>
    <scope>NUCLEOTIDE SEQUENCE [GENOMIC DNA]</scope>
    <source>
        <strain>Silver</strain>
    </source>
</reference>
<name>5HT1A_VULVU</name>
<sequence>MEGLSPGQGNNTTSSEGPFGTRGNATGISDVTFSYQVITSLLLGTLIFCAVLGNACVVAAIALERSLQNVANYLIGSLAVTDLMVSVLVLPMAALYQVLNKWTLGQVTCDLFIALDVLCCTSSILHLCAIALDRYWAITDPIDYVNKRTPRRAAALISLTWLIGFLISIPPMLGWRTPEDRSDPDACTISKDHGYTIYSTFGAFYIPLLLMLVLYGRIFRAARFRIRKTVKKAERKGADARSGVSPAPQPRKSVNGEPGGREWRQGPGSKAGGPLCTNGAVRRGDDGAALEVIEVHRVGSSKEHLPLPSEAGAIPCAPASFEKKNERNAEAKRKMALARERKTVKTLGIIMGTFILCWLPFFIVALVLPFCESSCHMPTLLGAIINWLGYSNSLLNPVIYAYFNKDFQNAFKKIVRCKFCRRR</sequence>
<organism>
    <name type="scientific">Vulpes vulpes</name>
    <name type="common">Red fox</name>
    <dbReference type="NCBI Taxonomy" id="9627"/>
    <lineage>
        <taxon>Eukaryota</taxon>
        <taxon>Metazoa</taxon>
        <taxon>Chordata</taxon>
        <taxon>Craniata</taxon>
        <taxon>Vertebrata</taxon>
        <taxon>Euteleostomi</taxon>
        <taxon>Mammalia</taxon>
        <taxon>Eutheria</taxon>
        <taxon>Laurasiatheria</taxon>
        <taxon>Carnivora</taxon>
        <taxon>Caniformia</taxon>
        <taxon>Canidae</taxon>
        <taxon>Vulpes</taxon>
    </lineage>
</organism>